<sequence length="114" mass="12200">MAEITSAKAMARTVRVSPRKSRLVLDNIRGKSVADAIAILTFTPNKAAEIILKVLNSAVANAENNFGLDKANLVVSEAFANEGPTMKRFRPRAKGSASPINKRTAHITVAVAEK</sequence>
<reference key="1">
    <citation type="journal article" date="2010" name="Genome Biol.">
        <title>Structure and dynamics of the pan-genome of Streptococcus pneumoniae and closely related species.</title>
        <authorList>
            <person name="Donati C."/>
            <person name="Hiller N.L."/>
            <person name="Tettelin H."/>
            <person name="Muzzi A."/>
            <person name="Croucher N.J."/>
            <person name="Angiuoli S.V."/>
            <person name="Oggioni M."/>
            <person name="Dunning Hotopp J.C."/>
            <person name="Hu F.Z."/>
            <person name="Riley D.R."/>
            <person name="Covacci A."/>
            <person name="Mitchell T.J."/>
            <person name="Bentley S.D."/>
            <person name="Kilian M."/>
            <person name="Ehrlich G.D."/>
            <person name="Rappuoli R."/>
            <person name="Moxon E.R."/>
            <person name="Masignani V."/>
        </authorList>
    </citation>
    <scope>NUCLEOTIDE SEQUENCE [LARGE SCALE GENOMIC DNA]</scope>
    <source>
        <strain>P1031</strain>
    </source>
</reference>
<accession>C1CIA2</accession>
<feature type="chain" id="PRO_1000166089" description="Large ribosomal subunit protein uL22">
    <location>
        <begin position="1"/>
        <end position="114"/>
    </location>
</feature>
<evidence type="ECO:0000255" key="1">
    <source>
        <dbReference type="HAMAP-Rule" id="MF_01331"/>
    </source>
</evidence>
<evidence type="ECO:0000305" key="2"/>
<organism>
    <name type="scientific">Streptococcus pneumoniae (strain P1031)</name>
    <dbReference type="NCBI Taxonomy" id="488223"/>
    <lineage>
        <taxon>Bacteria</taxon>
        <taxon>Bacillati</taxon>
        <taxon>Bacillota</taxon>
        <taxon>Bacilli</taxon>
        <taxon>Lactobacillales</taxon>
        <taxon>Streptococcaceae</taxon>
        <taxon>Streptococcus</taxon>
    </lineage>
</organism>
<proteinExistence type="inferred from homology"/>
<keyword id="KW-0687">Ribonucleoprotein</keyword>
<keyword id="KW-0689">Ribosomal protein</keyword>
<keyword id="KW-0694">RNA-binding</keyword>
<keyword id="KW-0699">rRNA-binding</keyword>
<dbReference type="EMBL" id="CP000920">
    <property type="protein sequence ID" value="ACO20878.1"/>
    <property type="molecule type" value="Genomic_DNA"/>
</dbReference>
<dbReference type="RefSeq" id="WP_000818137.1">
    <property type="nucleotide sequence ID" value="NC_012467.1"/>
</dbReference>
<dbReference type="SMR" id="C1CIA2"/>
<dbReference type="GeneID" id="93738962"/>
<dbReference type="KEGG" id="spp:SPP_0265"/>
<dbReference type="HOGENOM" id="CLU_083987_3_3_9"/>
<dbReference type="GO" id="GO:0022625">
    <property type="term" value="C:cytosolic large ribosomal subunit"/>
    <property type="evidence" value="ECO:0007669"/>
    <property type="project" value="TreeGrafter"/>
</dbReference>
<dbReference type="GO" id="GO:0019843">
    <property type="term" value="F:rRNA binding"/>
    <property type="evidence" value="ECO:0007669"/>
    <property type="project" value="UniProtKB-UniRule"/>
</dbReference>
<dbReference type="GO" id="GO:0003735">
    <property type="term" value="F:structural constituent of ribosome"/>
    <property type="evidence" value="ECO:0007669"/>
    <property type="project" value="InterPro"/>
</dbReference>
<dbReference type="GO" id="GO:0006412">
    <property type="term" value="P:translation"/>
    <property type="evidence" value="ECO:0007669"/>
    <property type="project" value="UniProtKB-UniRule"/>
</dbReference>
<dbReference type="CDD" id="cd00336">
    <property type="entry name" value="Ribosomal_L22"/>
    <property type="match status" value="1"/>
</dbReference>
<dbReference type="FunFam" id="3.90.470.10:FF:000001">
    <property type="entry name" value="50S ribosomal protein L22"/>
    <property type="match status" value="1"/>
</dbReference>
<dbReference type="Gene3D" id="3.90.470.10">
    <property type="entry name" value="Ribosomal protein L22/L17"/>
    <property type="match status" value="1"/>
</dbReference>
<dbReference type="HAMAP" id="MF_01331_B">
    <property type="entry name" value="Ribosomal_uL22_B"/>
    <property type="match status" value="1"/>
</dbReference>
<dbReference type="InterPro" id="IPR001063">
    <property type="entry name" value="Ribosomal_uL22"/>
</dbReference>
<dbReference type="InterPro" id="IPR005727">
    <property type="entry name" value="Ribosomal_uL22_bac/chlpt-type"/>
</dbReference>
<dbReference type="InterPro" id="IPR047867">
    <property type="entry name" value="Ribosomal_uL22_bac/org-type"/>
</dbReference>
<dbReference type="InterPro" id="IPR018260">
    <property type="entry name" value="Ribosomal_uL22_CS"/>
</dbReference>
<dbReference type="InterPro" id="IPR036394">
    <property type="entry name" value="Ribosomal_uL22_sf"/>
</dbReference>
<dbReference type="NCBIfam" id="TIGR01044">
    <property type="entry name" value="rplV_bact"/>
    <property type="match status" value="1"/>
</dbReference>
<dbReference type="PANTHER" id="PTHR13501">
    <property type="entry name" value="CHLOROPLAST 50S RIBOSOMAL PROTEIN L22-RELATED"/>
    <property type="match status" value="1"/>
</dbReference>
<dbReference type="PANTHER" id="PTHR13501:SF8">
    <property type="entry name" value="LARGE RIBOSOMAL SUBUNIT PROTEIN UL22M"/>
    <property type="match status" value="1"/>
</dbReference>
<dbReference type="Pfam" id="PF00237">
    <property type="entry name" value="Ribosomal_L22"/>
    <property type="match status" value="1"/>
</dbReference>
<dbReference type="SUPFAM" id="SSF54843">
    <property type="entry name" value="Ribosomal protein L22"/>
    <property type="match status" value="1"/>
</dbReference>
<dbReference type="PROSITE" id="PS00464">
    <property type="entry name" value="RIBOSOMAL_L22"/>
    <property type="match status" value="1"/>
</dbReference>
<comment type="function">
    <text evidence="1">This protein binds specifically to 23S rRNA; its binding is stimulated by other ribosomal proteins, e.g. L4, L17, and L20. It is important during the early stages of 50S assembly. It makes multiple contacts with different domains of the 23S rRNA in the assembled 50S subunit and ribosome (By similarity).</text>
</comment>
<comment type="function">
    <text evidence="1">The globular domain of the protein is located near the polypeptide exit tunnel on the outside of the subunit, while an extended beta-hairpin is found that lines the wall of the exit tunnel in the center of the 70S ribosome.</text>
</comment>
<comment type="subunit">
    <text evidence="1">Part of the 50S ribosomal subunit.</text>
</comment>
<comment type="similarity">
    <text evidence="1">Belongs to the universal ribosomal protein uL22 family.</text>
</comment>
<gene>
    <name evidence="1" type="primary">rplV</name>
    <name type="ordered locus">SPP_0265</name>
</gene>
<protein>
    <recommendedName>
        <fullName evidence="1">Large ribosomal subunit protein uL22</fullName>
    </recommendedName>
    <alternativeName>
        <fullName evidence="2">50S ribosomal protein L22</fullName>
    </alternativeName>
</protein>
<name>RL22_STRZP</name>